<protein>
    <recommendedName>
        <fullName evidence="5">187-kDa microtubule-associated protein AIR9</fullName>
    </recommendedName>
    <alternativeName>
        <fullName>Auxin-induced in root cultures protein 9</fullName>
    </alternativeName>
</protein>
<reference key="1">
    <citation type="journal article" date="2006" name="Curr. Biol.">
        <title>Microtubule-associated AIR9 recognizes the cortical division site at preprophase and cell-plate insertion.</title>
        <authorList>
            <person name="Buschmann H."/>
            <person name="Chan J."/>
            <person name="Sanchez-Pulido L."/>
            <person name="Andrade-Navarro M.A."/>
            <person name="Doonan J.H."/>
            <person name="Lloyd C.W."/>
        </authorList>
    </citation>
    <scope>NUCLEOTIDE SEQUENCE [MRNA]</scope>
    <scope>FUNCTION</scope>
    <scope>SUBCELLULAR LOCATION</scope>
    <source>
        <strain>cv. Landsberg erecta</strain>
    </source>
</reference>
<reference key="2">
    <citation type="journal article" date="1999" name="Nature">
        <title>Sequence and analysis of chromosome 2 of the plant Arabidopsis thaliana.</title>
        <authorList>
            <person name="Lin X."/>
            <person name="Kaul S."/>
            <person name="Rounsley S.D."/>
            <person name="Shea T.P."/>
            <person name="Benito M.-I."/>
            <person name="Town C.D."/>
            <person name="Fujii C.Y."/>
            <person name="Mason T.M."/>
            <person name="Bowman C.L."/>
            <person name="Barnstead M.E."/>
            <person name="Feldblyum T.V."/>
            <person name="Buell C.R."/>
            <person name="Ketchum K.A."/>
            <person name="Lee J.J."/>
            <person name="Ronning C.M."/>
            <person name="Koo H.L."/>
            <person name="Moffat K.S."/>
            <person name="Cronin L.A."/>
            <person name="Shen M."/>
            <person name="Pai G."/>
            <person name="Van Aken S."/>
            <person name="Umayam L."/>
            <person name="Tallon L.J."/>
            <person name="Gill J.E."/>
            <person name="Adams M.D."/>
            <person name="Carrera A.J."/>
            <person name="Creasy T.H."/>
            <person name="Goodman H.M."/>
            <person name="Somerville C.R."/>
            <person name="Copenhaver G.P."/>
            <person name="Preuss D."/>
            <person name="Nierman W.C."/>
            <person name="White O."/>
            <person name="Eisen J.A."/>
            <person name="Salzberg S.L."/>
            <person name="Fraser C.M."/>
            <person name="Venter J.C."/>
        </authorList>
    </citation>
    <scope>NUCLEOTIDE SEQUENCE [LARGE SCALE GENOMIC DNA]</scope>
    <source>
        <strain>cv. Columbia</strain>
    </source>
</reference>
<reference key="3">
    <citation type="journal article" date="2017" name="Plant J.">
        <title>Araport11: a complete reannotation of the Arabidopsis thaliana reference genome.</title>
        <authorList>
            <person name="Cheng C.Y."/>
            <person name="Krishnakumar V."/>
            <person name="Chan A.P."/>
            <person name="Thibaud-Nissen F."/>
            <person name="Schobel S."/>
            <person name="Town C.D."/>
        </authorList>
    </citation>
    <scope>GENOME REANNOTATION</scope>
    <source>
        <strain>cv. Columbia</strain>
    </source>
</reference>
<reference key="4">
    <citation type="submission" date="2006-07" db="EMBL/GenBank/DDBJ databases">
        <title>Large-scale analysis of RIKEN Arabidopsis full-length (RAFL) cDNAs.</title>
        <authorList>
            <person name="Totoki Y."/>
            <person name="Seki M."/>
            <person name="Ishida J."/>
            <person name="Nakajima M."/>
            <person name="Enju A."/>
            <person name="Kamiya A."/>
            <person name="Narusaka M."/>
            <person name="Shin-i T."/>
            <person name="Nakagawa M."/>
            <person name="Sakamoto N."/>
            <person name="Oishi K."/>
            <person name="Kohara Y."/>
            <person name="Kobayashi M."/>
            <person name="Toyoda A."/>
            <person name="Sakaki Y."/>
            <person name="Sakurai T."/>
            <person name="Iida K."/>
            <person name="Akiyama K."/>
            <person name="Satou M."/>
            <person name="Toyoda T."/>
            <person name="Konagaya A."/>
            <person name="Carninci P."/>
            <person name="Kawai J."/>
            <person name="Hayashizaki Y."/>
            <person name="Shinozaki K."/>
        </authorList>
    </citation>
    <scope>NUCLEOTIDE SEQUENCE [LARGE SCALE MRNA] OF 784-1708</scope>
    <source>
        <strain>cv. Columbia</strain>
    </source>
</reference>
<reference key="5">
    <citation type="journal article" date="1999" name="Plant Mol. Biol.">
        <title>Isolation and characterization of cDNA clones corresponding with mRNAs that accumulate during auxin-induced lateral root formation.</title>
        <authorList>
            <person name="Neuteboom L.W."/>
            <person name="Ng J.M.Y."/>
            <person name="Kuyper M."/>
            <person name="Clijdesdale O.R."/>
            <person name="Hooykaas P.J.J."/>
            <person name="van der Zaal B.J."/>
        </authorList>
    </citation>
    <scope>DEVELOPMENTAL STAGE</scope>
    <scope>INDUCTION</scope>
    <source>
        <strain>cv. Columbia</strain>
    </source>
</reference>
<reference key="6">
    <citation type="journal article" date="2009" name="Plant Physiol.">
        <title>Large-scale Arabidopsis phosphoproteome profiling reveals novel chloroplast kinase substrates and phosphorylation networks.</title>
        <authorList>
            <person name="Reiland S."/>
            <person name="Messerli G."/>
            <person name="Baerenfaller K."/>
            <person name="Gerrits B."/>
            <person name="Endler A."/>
            <person name="Grossmann J."/>
            <person name="Gruissem W."/>
            <person name="Baginsky S."/>
        </authorList>
    </citation>
    <scope>IDENTIFICATION BY MASS SPECTROMETRY [LARGE SCALE ANALYSIS]</scope>
</reference>
<reference key="7">
    <citation type="journal article" date="2015" name="J. Cell Sci.">
        <title>Arabidopsis KCBP interacts with AIR9 but stays in the cortical division zone throughout mitosis via its MyTH4-FERM domain.</title>
        <authorList>
            <person name="Buschmann H."/>
            <person name="Dols J."/>
            <person name="Kopischke S."/>
            <person name="Pena E.J."/>
            <person name="Andrade-Navarro M.A."/>
            <person name="Heinlein M."/>
            <person name="Szymanski D.B."/>
            <person name="Zachgo S."/>
            <person name="Doonan J.H."/>
            <person name="Lloyd C.W."/>
        </authorList>
    </citation>
    <scope>INTERACTION WITH KCBP</scope>
    <scope>TISSUE SPECIFICITY</scope>
    <scope>SUBCELLULAR LOCATION</scope>
    <scope>DISRUPTION PHENOTYPE</scope>
</reference>
<comment type="function">
    <text evidence="3">Microtubule-associated protein that may be involved in the maturation of cell plates and proper insertion of cross-walls after cytokinesis.</text>
</comment>
<comment type="subunit">
    <text evidence="4">Interacts with KCBP.</text>
</comment>
<comment type="interaction">
    <interactant intactId="EBI-12513601">
        <id>F4IIU4</id>
    </interactant>
    <interactant intactId="EBI-1749651">
        <id>Q9FHN8</id>
        <label>KIN14E</label>
    </interactant>
    <organismsDiffer>false</organismsDiffer>
    <experiments>6</experiments>
</comment>
<comment type="subcellular location">
    <subcellularLocation>
        <location evidence="3">Cytoplasm</location>
        <location evidence="3">Cell cortex</location>
    </subcellularLocation>
    <subcellularLocation>
        <location evidence="3">Cytoplasm</location>
        <location evidence="3">Cytoskeleton</location>
        <location evidence="3">Phragmoplast</location>
    </subcellularLocation>
    <text evidence="4">During interphase, binds cortical microtubules. In M-phase, locates to the preprophase band. During cytokinesis, binds the phragmoplast but not the forming cell plate at the midline, and at a later stage the cortical division site. After cell-plate insertion, enters the new cross-wall.</text>
</comment>
<comment type="tissue specificity">
    <text evidence="4">Strongly expressed in dividing cells, like the meristemic region of the root tip.</text>
</comment>
<comment type="developmental stage">
    <text evidence="2">Expressed during auxin-induced lateral root formation.</text>
</comment>
<comment type="induction">
    <text evidence="2">Induced between 4 and 8 hours after treatment with auxin and remains high for at least 24 hours.</text>
</comment>
<comment type="disruption phenotype">
    <text evidence="4">No visible phenotype.</text>
</comment>
<comment type="sequence caution" evidence="6">
    <conflict type="erroneous gene model prediction">
        <sequence resource="EMBL-CDS" id="AAC16266"/>
    </conflict>
</comment>
<organism>
    <name type="scientific">Arabidopsis thaliana</name>
    <name type="common">Mouse-ear cress</name>
    <dbReference type="NCBI Taxonomy" id="3702"/>
    <lineage>
        <taxon>Eukaryota</taxon>
        <taxon>Viridiplantae</taxon>
        <taxon>Streptophyta</taxon>
        <taxon>Embryophyta</taxon>
        <taxon>Tracheophyta</taxon>
        <taxon>Spermatophyta</taxon>
        <taxon>Magnoliopsida</taxon>
        <taxon>eudicotyledons</taxon>
        <taxon>Gunneridae</taxon>
        <taxon>Pentapetalae</taxon>
        <taxon>rosids</taxon>
        <taxon>malvids</taxon>
        <taxon>Brassicales</taxon>
        <taxon>Brassicaceae</taxon>
        <taxon>Camelineae</taxon>
        <taxon>Arabidopsis</taxon>
    </lineage>
</organism>
<keyword id="KW-0131">Cell cycle</keyword>
<keyword id="KW-0132">Cell division</keyword>
<keyword id="KW-0963">Cytoplasm</keyword>
<keyword id="KW-0206">Cytoskeleton</keyword>
<keyword id="KW-0433">Leucine-rich repeat</keyword>
<keyword id="KW-0493">Microtubule</keyword>
<keyword id="KW-0498">Mitosis</keyword>
<keyword id="KW-1185">Reference proteome</keyword>
<keyword id="KW-0677">Repeat</keyword>
<sequence>MEEVAAKVEEETVETNVDAVKEDNATIANESRSPESVSAVSVVSNRAASTKKKPVISSNLIKPTASSSLRVSGTTPVTIRRNSTGGVTENLAGTSKVLPKQVSTTASRTDPVRRSLPELRKSSVSSLSAKTVSKPSLSESKKSVPVSPGSRSLTKSTGFSLSKPESSARPAMSVSVSSKRAPSSSVDSSGSRTSSGRLHSTLTSGRTVSKVSSPSAGSSPSVSSSIRSKSFSSPLDRTSNFSGRKKTSTPESRDSRLIILPKVEVKAGDDMRLDLRGHRIRSLTSGGLHLSPNLEFVYLRDNLLSTLEGIEILNRVKVLDLSFNDFKGPGFEPLENCKMLQQLYLAGNQITSLASLPQLPNLEFLSVAQNKLKSLAMASQPRLQVLAASKNKITTLKDFPYLPVLEHLRVEENPLLKISHLEAASILLVGPTLKKFNDRDLSREEVAIAKRYPPQTALCLREGWEFCKSDLAAESTFRFLVERWKDTLPSGYLIKEAHVDRPSEEAPCQCHFGLFQESPTATDQELALKFQWSVADRSLSNFVPILNATKEVYWPKREDIGKILKIECTPVMAETEYPSIFAISSPVQRGKGIPKVVSLELNGELVEGNIIKGQAVVAWCGGTPGKCITSWLRRKWNGSPVVIDGAEDEEYMLSLDDVGSSMVFMYTPVTEGGARGEPQYKYTEFVKAAPPSVSNVRITGDAVEGCVLKGVGDYFGGKEGPSKFEWLRKNKETGELSLISAGTSEYTLTQEDVGTHVTFVYIPANFEGLEGEPVSTSSSVVKPAPPKVTDAKIVGDLRENSKVTVTGTVTGGTEGSSRVQWFKSSCSILEGDNSLEELSTSKVAKSFRIPLGAVGYYIVAKYTPMTPDGECGEPVYVLSERAVETLPPSLNFLSITGDNIEGGILTASYGYIGGHEGKSKYEWHYHKAENDLPGALIPEASGLLQYTITKEAIGKFISFQCIPVRDDGIVGEPRSCMSQERVRPGNPSTVSLHVVGALVEGTMLSAEKEYWGGEEGASVFRWFRTNSDGTPCEIKGATTSSYLLSVGDIGYFISVSYEPVRNDRARGPTAISEIAGPIVAGHPNCQSLEFLGSMIEGQRLSFVASYTGGMKGNCYLEWVRVKNNGVKEILSSDEFLDLSLDDVGESIELIYTPVREDGIEGSPRSIRTDGIAPANPMGLELLIPDCCEKQEVVPHKTYFGGHEGVGEYIWYRTKVKLHGSALTEISYAGEEVVVCCRTLKYTPSLEDVGAYLVLYWIPTRVDGRSGKPVVVITNSPVAPADPEVSNVRVKKLFSDAYSGEGEYFGGHEGPSLFSWYRENDGTIDLIDGANSKTYEVTESDYNCRILFGYTPVRSDSVVGELKMSEPTEIILPEVPKVDMLAFTGKAVQGDVLTAVQVIPKTEIQQLVWSKYKGDIQYQWFRSPESGDKISYEALSSEISCSYKVRFEDIGRCLKCECVVHDVFGRSSELAYAETDPISPGFPRIEKLEIEGQGFHTNLYAVRGNYFGGKEGKSKIQWLRSMVGSPDLISIPGETGRMYEANVDDVGYRLVVVYTPIREDGVQGHPVSASTEPVAVEPDILKEVRQKLETGLVKFEVLCDKDPYPKKIVGEGNLERRMLEMNRKRIKVVKPGSKTSFATTEVRGSYGPPFHVETFRNDQRRLRIVVDSENEVDIVVQSRHLRDVIVLVIRGFAQRFNSTSLNSLLKIDT</sequence>
<name>AIR9_ARATH</name>
<gene>
    <name evidence="9" type="primary">AIR9</name>
    <name evidence="7" type="ordered locus">At2g34680</name>
    <name evidence="8" type="ORF">T29F13</name>
</gene>
<proteinExistence type="evidence at protein level"/>
<accession>F4IIU4</accession>
<accession>O64588</accession>
<accession>Q00NU6</accession>
<accession>Q0WPR3</accession>
<feature type="chain" id="PRO_0000429360" description="187-kDa microtubule-associated protein AIR9">
    <location>
        <begin position="1"/>
        <end position="1708"/>
    </location>
</feature>
<feature type="repeat" description="LRR 1">
    <location>
        <begin position="267"/>
        <end position="290"/>
    </location>
</feature>
<feature type="repeat" description="LRR 2">
    <location>
        <begin position="291"/>
        <end position="315"/>
    </location>
</feature>
<feature type="repeat" description="LRR 3">
    <location>
        <begin position="316"/>
        <end position="335"/>
    </location>
</feature>
<feature type="repeat" description="LRR 4">
    <location>
        <begin position="337"/>
        <end position="359"/>
    </location>
</feature>
<feature type="repeat" description="LRR 5">
    <location>
        <begin position="360"/>
        <end position="382"/>
    </location>
</feature>
<feature type="repeat" description="LRR 6">
    <location>
        <begin position="384"/>
        <end position="402"/>
    </location>
</feature>
<feature type="repeat" description="LRR 7">
    <location>
        <begin position="403"/>
        <end position="425"/>
    </location>
</feature>
<feature type="repeat" description="A9 1">
    <location>
        <begin position="489"/>
        <end position="584"/>
    </location>
</feature>
<feature type="repeat" description="A9 2">
    <location>
        <begin position="601"/>
        <end position="682"/>
    </location>
</feature>
<feature type="repeat" description="A9 3">
    <location>
        <begin position="698"/>
        <end position="777"/>
    </location>
</feature>
<feature type="repeat" description="A9 4">
    <location>
        <begin position="793"/>
        <end position="878"/>
    </location>
</feature>
<feature type="repeat" description="A9 5">
    <location>
        <begin position="895"/>
        <end position="977"/>
    </location>
</feature>
<feature type="repeat" description="A9 6">
    <location>
        <begin position="994"/>
        <end position="1073"/>
    </location>
</feature>
<feature type="repeat" description="A9 7">
    <location>
        <begin position="1090"/>
        <end position="1167"/>
    </location>
</feature>
<feature type="repeat" description="A9 8">
    <location>
        <begin position="1183"/>
        <end position="1272"/>
    </location>
</feature>
<feature type="repeat" description="A9 9">
    <location>
        <begin position="1287"/>
        <end position="1365"/>
    </location>
</feature>
<feature type="repeat" description="A9 10">
    <location>
        <begin position="1382"/>
        <end position="1473"/>
    </location>
</feature>
<feature type="repeat" description="A9 11">
    <location>
        <begin position="1489"/>
        <end position="1569"/>
    </location>
</feature>
<feature type="region of interest" description="Disordered" evidence="1">
    <location>
        <begin position="67"/>
        <end position="255"/>
    </location>
</feature>
<feature type="compositionally biased region" description="Polar residues" evidence="1">
    <location>
        <begin position="67"/>
        <end position="93"/>
    </location>
</feature>
<feature type="compositionally biased region" description="Basic and acidic residues" evidence="1">
    <location>
        <begin position="110"/>
        <end position="121"/>
    </location>
</feature>
<feature type="compositionally biased region" description="Low complexity" evidence="1">
    <location>
        <begin position="122"/>
        <end position="134"/>
    </location>
</feature>
<feature type="compositionally biased region" description="Polar residues" evidence="1">
    <location>
        <begin position="149"/>
        <end position="165"/>
    </location>
</feature>
<feature type="compositionally biased region" description="Low complexity" evidence="1">
    <location>
        <begin position="173"/>
        <end position="234"/>
    </location>
</feature>
<feature type="sequence conflict" description="In Ref. 1; ABC00767." evidence="6" ref="1">
    <original>T</original>
    <variation>A</variation>
    <location>
        <position position="94"/>
    </location>
</feature>
<feature type="sequence conflict" description="In Ref. 1; ABC00767." evidence="6" ref="1">
    <original>S</original>
    <variation>A</variation>
    <location>
        <position position="248"/>
    </location>
</feature>
<dbReference type="EMBL" id="DQ291137">
    <property type="protein sequence ID" value="ABC00767.1"/>
    <property type="molecule type" value="mRNA"/>
</dbReference>
<dbReference type="EMBL" id="AC003096">
    <property type="protein sequence ID" value="AAC16266.1"/>
    <property type="status" value="ALT_SEQ"/>
    <property type="molecule type" value="Genomic_DNA"/>
</dbReference>
<dbReference type="EMBL" id="CP002685">
    <property type="protein sequence ID" value="AEC09009.1"/>
    <property type="molecule type" value="Genomic_DNA"/>
</dbReference>
<dbReference type="EMBL" id="AK228999">
    <property type="protein sequence ID" value="BAF00886.1"/>
    <property type="molecule type" value="mRNA"/>
</dbReference>
<dbReference type="PIR" id="T01367">
    <property type="entry name" value="T01367"/>
</dbReference>
<dbReference type="RefSeq" id="NP_181015.7">
    <property type="nucleotide sequence ID" value="NM_129022.8"/>
</dbReference>
<dbReference type="SMR" id="F4IIU4"/>
<dbReference type="BioGRID" id="3379">
    <property type="interactions" value="2"/>
</dbReference>
<dbReference type="FunCoup" id="F4IIU4">
    <property type="interactions" value="943"/>
</dbReference>
<dbReference type="IntAct" id="F4IIU4">
    <property type="interactions" value="1"/>
</dbReference>
<dbReference type="STRING" id="3702.F4IIU4"/>
<dbReference type="GlyGen" id="F4IIU4">
    <property type="glycosylation" value="2 sites"/>
</dbReference>
<dbReference type="iPTMnet" id="F4IIU4"/>
<dbReference type="PaxDb" id="3702-AT2G34680.1"/>
<dbReference type="ProteomicsDB" id="245066"/>
<dbReference type="EnsemblPlants" id="AT2G34680.1">
    <property type="protein sequence ID" value="AT2G34680.1"/>
    <property type="gene ID" value="AT2G34680"/>
</dbReference>
<dbReference type="GeneID" id="818033"/>
<dbReference type="Gramene" id="AT2G34680.1">
    <property type="protein sequence ID" value="AT2G34680.1"/>
    <property type="gene ID" value="AT2G34680"/>
</dbReference>
<dbReference type="KEGG" id="ath:AT2G34680"/>
<dbReference type="Araport" id="AT2G34680"/>
<dbReference type="TAIR" id="AT2G34680">
    <property type="gene designation" value="AIR9"/>
</dbReference>
<dbReference type="eggNOG" id="KOG0531">
    <property type="taxonomic scope" value="Eukaryota"/>
</dbReference>
<dbReference type="HOGENOM" id="CLU_002784_0_0_1"/>
<dbReference type="InParanoid" id="F4IIU4"/>
<dbReference type="OMA" id="TIFRWIL"/>
<dbReference type="PRO" id="PR:F4IIU4"/>
<dbReference type="Proteomes" id="UP000006548">
    <property type="component" value="Chromosome 2"/>
</dbReference>
<dbReference type="ExpressionAtlas" id="F4IIU4">
    <property type="expression patterns" value="baseline and differential"/>
</dbReference>
<dbReference type="GO" id="GO:0055028">
    <property type="term" value="C:cortical microtubule"/>
    <property type="evidence" value="ECO:0000314"/>
    <property type="project" value="UniProtKB"/>
</dbReference>
<dbReference type="GO" id="GO:0009524">
    <property type="term" value="C:phragmoplast"/>
    <property type="evidence" value="ECO:0000314"/>
    <property type="project" value="UniProtKB"/>
</dbReference>
<dbReference type="GO" id="GO:0005886">
    <property type="term" value="C:plasma membrane"/>
    <property type="evidence" value="ECO:0007005"/>
    <property type="project" value="TAIR"/>
</dbReference>
<dbReference type="GO" id="GO:0009506">
    <property type="term" value="C:plasmodesma"/>
    <property type="evidence" value="ECO:0007005"/>
    <property type="project" value="TAIR"/>
</dbReference>
<dbReference type="GO" id="GO:0009574">
    <property type="term" value="C:preprophase band"/>
    <property type="evidence" value="ECO:0000314"/>
    <property type="project" value="UniProtKB"/>
</dbReference>
<dbReference type="GO" id="GO:0051301">
    <property type="term" value="P:cell division"/>
    <property type="evidence" value="ECO:0007669"/>
    <property type="project" value="UniProtKB-KW"/>
</dbReference>
<dbReference type="GO" id="GO:0010102">
    <property type="term" value="P:lateral root morphogenesis"/>
    <property type="evidence" value="ECO:0000270"/>
    <property type="project" value="TAIR"/>
</dbReference>
<dbReference type="GO" id="GO:0009733">
    <property type="term" value="P:response to auxin"/>
    <property type="evidence" value="ECO:0000270"/>
    <property type="project" value="TAIR"/>
</dbReference>
<dbReference type="FunFam" id="2.60.40.2700:FF:000002">
    <property type="entry name" value="187-kDa microtubule-associated protein AIR9"/>
    <property type="match status" value="1"/>
</dbReference>
<dbReference type="FunFam" id="3.80.10.10:FF:000328">
    <property type="entry name" value="187-kDa microtubule-associated protein AIR9"/>
    <property type="match status" value="1"/>
</dbReference>
<dbReference type="FunFam" id="2.60.40.2700:FF:000003">
    <property type="entry name" value="187-kDa microtubule-associated protein AIR9 isoform X2"/>
    <property type="match status" value="1"/>
</dbReference>
<dbReference type="Gene3D" id="2.60.40.2700">
    <property type="match status" value="3"/>
</dbReference>
<dbReference type="Gene3D" id="3.80.10.10">
    <property type="entry name" value="Ribonuclease Inhibitor"/>
    <property type="match status" value="2"/>
</dbReference>
<dbReference type="InterPro" id="IPR056284">
    <property type="entry name" value="AIR9-like_A9"/>
</dbReference>
<dbReference type="InterPro" id="IPR001611">
    <property type="entry name" value="Leu-rich_rpt"/>
</dbReference>
<dbReference type="InterPro" id="IPR025875">
    <property type="entry name" value="Leu-rich_rpt_4"/>
</dbReference>
<dbReference type="InterPro" id="IPR032675">
    <property type="entry name" value="LRR_dom_sf"/>
</dbReference>
<dbReference type="InterPro" id="IPR056287">
    <property type="entry name" value="PH_AIR9"/>
</dbReference>
<dbReference type="PANTHER" id="PTHR31149:SF11">
    <property type="entry name" value="187-KDA MICROTUBULE-ASSOCIATED PROTEIN AIR9"/>
    <property type="match status" value="1"/>
</dbReference>
<dbReference type="PANTHER" id="PTHR31149">
    <property type="entry name" value="EXPRESSED PROTEIN"/>
    <property type="match status" value="1"/>
</dbReference>
<dbReference type="Pfam" id="PF23197">
    <property type="entry name" value="IG_AIR9"/>
    <property type="match status" value="10"/>
</dbReference>
<dbReference type="Pfam" id="PF12799">
    <property type="entry name" value="LRR_4"/>
    <property type="match status" value="1"/>
</dbReference>
<dbReference type="Pfam" id="PF23218">
    <property type="entry name" value="PH_AIR9"/>
    <property type="match status" value="1"/>
</dbReference>
<dbReference type="SUPFAM" id="SSF52075">
    <property type="entry name" value="Outer arm dynein light chain 1"/>
    <property type="match status" value="1"/>
</dbReference>
<dbReference type="PROSITE" id="PS51450">
    <property type="entry name" value="LRR"/>
    <property type="match status" value="6"/>
</dbReference>
<evidence type="ECO:0000256" key="1">
    <source>
        <dbReference type="SAM" id="MobiDB-lite"/>
    </source>
</evidence>
<evidence type="ECO:0000269" key="2">
    <source>
    </source>
</evidence>
<evidence type="ECO:0000269" key="3">
    <source>
    </source>
</evidence>
<evidence type="ECO:0000269" key="4">
    <source>
    </source>
</evidence>
<evidence type="ECO:0000303" key="5">
    <source>
    </source>
</evidence>
<evidence type="ECO:0000305" key="6"/>
<evidence type="ECO:0000312" key="7">
    <source>
        <dbReference type="Araport" id="AT2G34680"/>
    </source>
</evidence>
<evidence type="ECO:0000312" key="8">
    <source>
        <dbReference type="EMBL" id="AAC16266.1"/>
    </source>
</evidence>
<evidence type="ECO:0000312" key="9">
    <source>
        <dbReference type="EMBL" id="ABC00767.1"/>
    </source>
</evidence>